<accession>C0QY51</accession>
<comment type="function">
    <text evidence="1">Required for the formation of a threonylcarbamoyl group on adenosine at position 37 (t(6)A37) in tRNAs that read codons beginning with adenine. Is involved in the transfer of the threonylcarbamoyl moiety of threonylcarbamoyl-AMP (TC-AMP) to the N6 group of A37, together with TsaE and TsaB. TsaD likely plays a direct catalytic role in this reaction.</text>
</comment>
<comment type="catalytic activity">
    <reaction evidence="1">
        <text>L-threonylcarbamoyladenylate + adenosine(37) in tRNA = N(6)-L-threonylcarbamoyladenosine(37) in tRNA + AMP + H(+)</text>
        <dbReference type="Rhea" id="RHEA:37059"/>
        <dbReference type="Rhea" id="RHEA-COMP:10162"/>
        <dbReference type="Rhea" id="RHEA-COMP:10163"/>
        <dbReference type="ChEBI" id="CHEBI:15378"/>
        <dbReference type="ChEBI" id="CHEBI:73682"/>
        <dbReference type="ChEBI" id="CHEBI:74411"/>
        <dbReference type="ChEBI" id="CHEBI:74418"/>
        <dbReference type="ChEBI" id="CHEBI:456215"/>
        <dbReference type="EC" id="2.3.1.234"/>
    </reaction>
</comment>
<comment type="cofactor">
    <cofactor evidence="1">
        <name>Fe(2+)</name>
        <dbReference type="ChEBI" id="CHEBI:29033"/>
    </cofactor>
    <text evidence="1">Binds 1 Fe(2+) ion per subunit.</text>
</comment>
<comment type="subcellular location">
    <subcellularLocation>
        <location evidence="1">Cytoplasm</location>
    </subcellularLocation>
</comment>
<comment type="similarity">
    <text evidence="1">Belongs to the KAE1 / TsaD family.</text>
</comment>
<name>TSAD_BRAHW</name>
<organism>
    <name type="scientific">Brachyspira hyodysenteriae (strain ATCC 49526 / WA1)</name>
    <dbReference type="NCBI Taxonomy" id="565034"/>
    <lineage>
        <taxon>Bacteria</taxon>
        <taxon>Pseudomonadati</taxon>
        <taxon>Spirochaetota</taxon>
        <taxon>Spirochaetia</taxon>
        <taxon>Brachyspirales</taxon>
        <taxon>Brachyspiraceae</taxon>
        <taxon>Brachyspira</taxon>
    </lineage>
</organism>
<evidence type="ECO:0000255" key="1">
    <source>
        <dbReference type="HAMAP-Rule" id="MF_01445"/>
    </source>
</evidence>
<sequence>MKILGIDTSCDDTSAAIVEDGKNVLSSVLSSSIDAHKEFQGVVPEIAARKHLEAILYVIDKALKDANTTLDDIDLFAVTNRPGLLGSLLVGVASAKSLAFSLNKPLLALDHIAAHIYSPHLTNDIEFPYIALVVSGGHTIITEVHDYGEYKVVGTTLDDAVGEAYDKVSKFLNLGYPGGPIIDRLAKEGNKEAIKYPIVLLNGIDEFNFSYSGLKTACVYSTKKYLKEGYEATNENIAAAFQISAIEPLYIKTLKYAEKSGIKRVTLSGGVACNSYLRDRFGNSKDFECYLPALKYTTDNAAMVAGLAYHMKDKQNFADYNLDCFSRVLNKKYNKNKSAK</sequence>
<protein>
    <recommendedName>
        <fullName evidence="1">tRNA N6-adenosine threonylcarbamoyltransferase</fullName>
        <ecNumber evidence="1">2.3.1.234</ecNumber>
    </recommendedName>
    <alternativeName>
        <fullName evidence="1">N6-L-threonylcarbamoyladenine synthase</fullName>
        <shortName evidence="1">t(6)A synthase</shortName>
    </alternativeName>
    <alternativeName>
        <fullName evidence="1">t(6)A37 threonylcarbamoyladenosine biosynthesis protein TsaD</fullName>
    </alternativeName>
    <alternativeName>
        <fullName evidence="1">tRNA threonylcarbamoyladenosine biosynthesis protein TsaD</fullName>
    </alternativeName>
</protein>
<proteinExistence type="inferred from homology"/>
<gene>
    <name evidence="1" type="primary">tsaD</name>
    <name type="synonym">gcp</name>
    <name type="ordered locus">BHWA1_00427</name>
</gene>
<feature type="chain" id="PRO_1000184953" description="tRNA N6-adenosine threonylcarbamoyltransferase">
    <location>
        <begin position="1"/>
        <end position="340"/>
    </location>
</feature>
<feature type="binding site" evidence="1">
    <location>
        <position position="111"/>
    </location>
    <ligand>
        <name>Fe cation</name>
        <dbReference type="ChEBI" id="CHEBI:24875"/>
    </ligand>
</feature>
<feature type="binding site" evidence="1">
    <location>
        <position position="115"/>
    </location>
    <ligand>
        <name>Fe cation</name>
        <dbReference type="ChEBI" id="CHEBI:24875"/>
    </ligand>
</feature>
<feature type="binding site" evidence="1">
    <location>
        <begin position="133"/>
        <end position="137"/>
    </location>
    <ligand>
        <name>substrate</name>
    </ligand>
</feature>
<feature type="binding site" evidence="1">
    <location>
        <position position="166"/>
    </location>
    <ligand>
        <name>substrate</name>
    </ligand>
</feature>
<feature type="binding site" evidence="1">
    <location>
        <position position="179"/>
    </location>
    <ligand>
        <name>substrate</name>
    </ligand>
</feature>
<feature type="binding site" evidence="1">
    <location>
        <position position="183"/>
    </location>
    <ligand>
        <name>substrate</name>
    </ligand>
</feature>
<feature type="binding site" evidence="1">
    <location>
        <position position="274"/>
    </location>
    <ligand>
        <name>substrate</name>
    </ligand>
</feature>
<feature type="binding site" evidence="1">
    <location>
        <position position="299"/>
    </location>
    <ligand>
        <name>Fe cation</name>
        <dbReference type="ChEBI" id="CHEBI:24875"/>
    </ligand>
</feature>
<dbReference type="EC" id="2.3.1.234" evidence="1"/>
<dbReference type="EMBL" id="CP001357">
    <property type="protein sequence ID" value="ACN82923.1"/>
    <property type="molecule type" value="Genomic_DNA"/>
</dbReference>
<dbReference type="RefSeq" id="WP_012669975.1">
    <property type="nucleotide sequence ID" value="NC_012225.1"/>
</dbReference>
<dbReference type="SMR" id="C0QY51"/>
<dbReference type="STRING" id="565034.BHWA1_00427"/>
<dbReference type="KEGG" id="bhy:BHWA1_00427"/>
<dbReference type="eggNOG" id="COG0533">
    <property type="taxonomic scope" value="Bacteria"/>
</dbReference>
<dbReference type="HOGENOM" id="CLU_023208_0_2_12"/>
<dbReference type="Proteomes" id="UP000001803">
    <property type="component" value="Chromosome"/>
</dbReference>
<dbReference type="GO" id="GO:0005737">
    <property type="term" value="C:cytoplasm"/>
    <property type="evidence" value="ECO:0007669"/>
    <property type="project" value="UniProtKB-SubCell"/>
</dbReference>
<dbReference type="GO" id="GO:0005506">
    <property type="term" value="F:iron ion binding"/>
    <property type="evidence" value="ECO:0007669"/>
    <property type="project" value="UniProtKB-UniRule"/>
</dbReference>
<dbReference type="GO" id="GO:0061711">
    <property type="term" value="F:N(6)-L-threonylcarbamoyladenine synthase activity"/>
    <property type="evidence" value="ECO:0007669"/>
    <property type="project" value="UniProtKB-EC"/>
</dbReference>
<dbReference type="GO" id="GO:0002949">
    <property type="term" value="P:tRNA threonylcarbamoyladenosine modification"/>
    <property type="evidence" value="ECO:0007669"/>
    <property type="project" value="UniProtKB-UniRule"/>
</dbReference>
<dbReference type="CDD" id="cd24133">
    <property type="entry name" value="ASKHA_NBD_TsaD_bac"/>
    <property type="match status" value="1"/>
</dbReference>
<dbReference type="FunFam" id="3.30.420.40:FF:000040">
    <property type="entry name" value="tRNA N6-adenosine threonylcarbamoyltransferase"/>
    <property type="match status" value="1"/>
</dbReference>
<dbReference type="Gene3D" id="3.30.420.40">
    <property type="match status" value="2"/>
</dbReference>
<dbReference type="HAMAP" id="MF_01445">
    <property type="entry name" value="TsaD"/>
    <property type="match status" value="1"/>
</dbReference>
<dbReference type="InterPro" id="IPR043129">
    <property type="entry name" value="ATPase_NBD"/>
</dbReference>
<dbReference type="InterPro" id="IPR000905">
    <property type="entry name" value="Gcp-like_dom"/>
</dbReference>
<dbReference type="InterPro" id="IPR017861">
    <property type="entry name" value="KAE1/TsaD"/>
</dbReference>
<dbReference type="InterPro" id="IPR017860">
    <property type="entry name" value="Peptidase_M22_CS"/>
</dbReference>
<dbReference type="InterPro" id="IPR022450">
    <property type="entry name" value="TsaD"/>
</dbReference>
<dbReference type="NCBIfam" id="TIGR00329">
    <property type="entry name" value="gcp_kae1"/>
    <property type="match status" value="1"/>
</dbReference>
<dbReference type="NCBIfam" id="TIGR03723">
    <property type="entry name" value="T6A_TsaD_YgjD"/>
    <property type="match status" value="1"/>
</dbReference>
<dbReference type="PANTHER" id="PTHR11735">
    <property type="entry name" value="TRNA N6-ADENOSINE THREONYLCARBAMOYLTRANSFERASE"/>
    <property type="match status" value="1"/>
</dbReference>
<dbReference type="PANTHER" id="PTHR11735:SF6">
    <property type="entry name" value="TRNA N6-ADENOSINE THREONYLCARBAMOYLTRANSFERASE, MITOCHONDRIAL"/>
    <property type="match status" value="1"/>
</dbReference>
<dbReference type="Pfam" id="PF00814">
    <property type="entry name" value="TsaD"/>
    <property type="match status" value="1"/>
</dbReference>
<dbReference type="PRINTS" id="PR00789">
    <property type="entry name" value="OSIALOPTASE"/>
</dbReference>
<dbReference type="SUPFAM" id="SSF53067">
    <property type="entry name" value="Actin-like ATPase domain"/>
    <property type="match status" value="1"/>
</dbReference>
<dbReference type="PROSITE" id="PS01016">
    <property type="entry name" value="GLYCOPROTEASE"/>
    <property type="match status" value="1"/>
</dbReference>
<keyword id="KW-0012">Acyltransferase</keyword>
<keyword id="KW-0963">Cytoplasm</keyword>
<keyword id="KW-0408">Iron</keyword>
<keyword id="KW-0479">Metal-binding</keyword>
<keyword id="KW-0808">Transferase</keyword>
<keyword id="KW-0819">tRNA processing</keyword>
<reference key="1">
    <citation type="journal article" date="2009" name="PLoS ONE">
        <title>Genome sequence of the pathogenic intestinal spirochete Brachyspira hyodysenteriae reveals adaptations to its lifestyle in the porcine large intestine.</title>
        <authorList>
            <person name="Bellgard M.I."/>
            <person name="Wanchanthuek P."/>
            <person name="La T."/>
            <person name="Ryan K."/>
            <person name="Moolhuijzen P."/>
            <person name="Albertyn Z."/>
            <person name="Shaban B."/>
            <person name="Motro Y."/>
            <person name="Dunn D.S."/>
            <person name="Schibeci D."/>
            <person name="Hunter A."/>
            <person name="Barrero R."/>
            <person name="Phillips N.D."/>
            <person name="Hampson D.J."/>
        </authorList>
    </citation>
    <scope>NUCLEOTIDE SEQUENCE [LARGE SCALE GENOMIC DNA]</scope>
    <source>
        <strain>ATCC 49526 / WA1</strain>
    </source>
</reference>